<accession>Q05610</accession>
<accession>D6VSQ5</accession>
<accession>Q66RE0</accession>
<organism>
    <name type="scientific">Saccharomyces cerevisiae (strain ATCC 204508 / S288c)</name>
    <name type="common">Baker's yeast</name>
    <dbReference type="NCBI Taxonomy" id="559292"/>
    <lineage>
        <taxon>Eukaryota</taxon>
        <taxon>Fungi</taxon>
        <taxon>Dikarya</taxon>
        <taxon>Ascomycota</taxon>
        <taxon>Saccharomycotina</taxon>
        <taxon>Saccharomycetes</taxon>
        <taxon>Saccharomycetales</taxon>
        <taxon>Saccharomycetaceae</taxon>
        <taxon>Saccharomyces</taxon>
    </lineage>
</organism>
<name>DON1_YEAST</name>
<evidence type="ECO:0000255" key="1">
    <source>
        <dbReference type="PROSITE-ProRule" id="PRU00468"/>
    </source>
</evidence>
<evidence type="ECO:0000256" key="2">
    <source>
        <dbReference type="SAM" id="MobiDB-lite"/>
    </source>
</evidence>
<evidence type="ECO:0000269" key="3">
    <source>
    </source>
</evidence>
<evidence type="ECO:0000305" key="4"/>
<dbReference type="EMBL" id="U51030">
    <property type="protein sequence ID" value="AAB64449.1"/>
    <property type="molecule type" value="Genomic_DNA"/>
</dbReference>
<dbReference type="EMBL" id="AY723788">
    <property type="protein sequence ID" value="AAU09705.1"/>
    <property type="molecule type" value="Genomic_DNA"/>
</dbReference>
<dbReference type="EMBL" id="BK006938">
    <property type="protein sequence ID" value="DAA12115.1"/>
    <property type="molecule type" value="Genomic_DNA"/>
</dbReference>
<dbReference type="PIR" id="S70131">
    <property type="entry name" value="S70131"/>
</dbReference>
<dbReference type="RefSeq" id="NP_010559.3">
    <property type="nucleotide sequence ID" value="NM_001180581.3"/>
</dbReference>
<dbReference type="BioGRID" id="32327">
    <property type="interactions" value="43"/>
</dbReference>
<dbReference type="DIP" id="DIP-1577N"/>
<dbReference type="FunCoup" id="Q05610">
    <property type="interactions" value="84"/>
</dbReference>
<dbReference type="IntAct" id="Q05610">
    <property type="interactions" value="9"/>
</dbReference>
<dbReference type="MINT" id="Q05610"/>
<dbReference type="STRING" id="4932.YDR273W"/>
<dbReference type="iPTMnet" id="Q05610"/>
<dbReference type="PaxDb" id="4932-YDR273W"/>
<dbReference type="PeptideAtlas" id="Q05610"/>
<dbReference type="EnsemblFungi" id="YDR273W_mRNA">
    <property type="protein sequence ID" value="YDR273W"/>
    <property type="gene ID" value="YDR273W"/>
</dbReference>
<dbReference type="GeneID" id="851866"/>
<dbReference type="KEGG" id="sce:YDR273W"/>
<dbReference type="AGR" id="SGD:S000002681"/>
<dbReference type="SGD" id="S000002681">
    <property type="gene designation" value="DON1"/>
</dbReference>
<dbReference type="VEuPathDB" id="FungiDB:YDR273W"/>
<dbReference type="GeneTree" id="ENSGT00390000013104"/>
<dbReference type="HOGENOM" id="CLU_839786_0_0_1"/>
<dbReference type="InParanoid" id="Q05610"/>
<dbReference type="OMA" id="DSCGLFA"/>
<dbReference type="OrthoDB" id="9942608at2759"/>
<dbReference type="BioCyc" id="YEAST:G3O-29840-MONOMER"/>
<dbReference type="BioGRID-ORCS" id="851866">
    <property type="hits" value="0 hits in 10 CRISPR screens"/>
</dbReference>
<dbReference type="PRO" id="PR:Q05610"/>
<dbReference type="Proteomes" id="UP000002311">
    <property type="component" value="Chromosome IV"/>
</dbReference>
<dbReference type="RNAct" id="Q05610">
    <property type="molecule type" value="protein"/>
</dbReference>
<dbReference type="GO" id="GO:0005737">
    <property type="term" value="C:cytoplasm"/>
    <property type="evidence" value="ECO:0000318"/>
    <property type="project" value="GO_Central"/>
</dbReference>
<dbReference type="GO" id="GO:0005628">
    <property type="term" value="C:prospore membrane"/>
    <property type="evidence" value="ECO:0000314"/>
    <property type="project" value="SGD"/>
</dbReference>
<dbReference type="GO" id="GO:0070056">
    <property type="term" value="C:prospore membrane leading edge"/>
    <property type="evidence" value="ECO:0000314"/>
    <property type="project" value="SGD"/>
</dbReference>
<dbReference type="GO" id="GO:0043130">
    <property type="term" value="F:ubiquitin binding"/>
    <property type="evidence" value="ECO:0000318"/>
    <property type="project" value="GO_Central"/>
</dbReference>
<dbReference type="GO" id="GO:0031624">
    <property type="term" value="F:ubiquitin conjugating enzyme binding"/>
    <property type="evidence" value="ECO:0000318"/>
    <property type="project" value="GO_Central"/>
</dbReference>
<dbReference type="GO" id="GO:0030476">
    <property type="term" value="P:ascospore wall assembly"/>
    <property type="evidence" value="ECO:0000353"/>
    <property type="project" value="SGD"/>
</dbReference>
<dbReference type="GO" id="GO:0051301">
    <property type="term" value="P:cell division"/>
    <property type="evidence" value="ECO:0007669"/>
    <property type="project" value="UniProtKB-KW"/>
</dbReference>
<dbReference type="GO" id="GO:0006511">
    <property type="term" value="P:ubiquitin-dependent protein catabolic process"/>
    <property type="evidence" value="ECO:0000318"/>
    <property type="project" value="GO_Central"/>
</dbReference>
<dbReference type="CDD" id="cd14372">
    <property type="entry name" value="CUE_Cue5p_like"/>
    <property type="match status" value="1"/>
</dbReference>
<dbReference type="FunFam" id="1.10.8.10:FF:000064">
    <property type="entry name" value="Similar to CUE domain-containing protein"/>
    <property type="match status" value="1"/>
</dbReference>
<dbReference type="Gene3D" id="1.10.8.10">
    <property type="entry name" value="DNA helicase RuvA subunit, C-terminal domain"/>
    <property type="match status" value="1"/>
</dbReference>
<dbReference type="InterPro" id="IPR003892">
    <property type="entry name" value="CUE"/>
</dbReference>
<dbReference type="InterPro" id="IPR041807">
    <property type="entry name" value="Cue5/Don1_CUE"/>
</dbReference>
<dbReference type="InterPro" id="IPR009060">
    <property type="entry name" value="UBA-like_sf"/>
</dbReference>
<dbReference type="PANTHER" id="PTHR16461">
    <property type="entry name" value="TOLL-INTERACTING PROTEIN"/>
    <property type="match status" value="1"/>
</dbReference>
<dbReference type="PANTHER" id="PTHR16461:SF5">
    <property type="entry name" value="TOLL-INTERACTING PROTEIN"/>
    <property type="match status" value="1"/>
</dbReference>
<dbReference type="Pfam" id="PF02845">
    <property type="entry name" value="CUE"/>
    <property type="match status" value="1"/>
</dbReference>
<dbReference type="SMART" id="SM00546">
    <property type="entry name" value="CUE"/>
    <property type="match status" value="1"/>
</dbReference>
<dbReference type="SUPFAM" id="SSF46934">
    <property type="entry name" value="UBA-like"/>
    <property type="match status" value="1"/>
</dbReference>
<dbReference type="PROSITE" id="PS51140">
    <property type="entry name" value="CUE"/>
    <property type="match status" value="1"/>
</dbReference>
<keyword id="KW-0131">Cell cycle</keyword>
<keyword id="KW-0132">Cell division</keyword>
<keyword id="KW-0469">Meiosis</keyword>
<keyword id="KW-0472">Membrane</keyword>
<keyword id="KW-1185">Reference proteome</keyword>
<keyword id="KW-0749">Sporulation</keyword>
<protein>
    <recommendedName>
        <fullName>Donuts protein 1</fullName>
    </recommendedName>
</protein>
<proteinExistence type="evidence at transcript level"/>
<feature type="chain" id="PRO_0000079977" description="Donuts protein 1">
    <location>
        <begin position="1"/>
        <end position="365"/>
    </location>
</feature>
<feature type="domain" description="CUE" evidence="1">
    <location>
        <begin position="82"/>
        <end position="125"/>
    </location>
</feature>
<feature type="region of interest" description="Disordered" evidence="2">
    <location>
        <begin position="28"/>
        <end position="49"/>
    </location>
</feature>
<feature type="region of interest" description="Disordered" evidence="2">
    <location>
        <begin position="215"/>
        <end position="246"/>
    </location>
</feature>
<feature type="region of interest" description="Disordered" evidence="2">
    <location>
        <begin position="286"/>
        <end position="335"/>
    </location>
</feature>
<feature type="compositionally biased region" description="Basic and acidic residues" evidence="2">
    <location>
        <begin position="224"/>
        <end position="244"/>
    </location>
</feature>
<feature type="compositionally biased region" description="Acidic residues" evidence="2">
    <location>
        <begin position="286"/>
        <end position="295"/>
    </location>
</feature>
<feature type="compositionally biased region" description="Basic and acidic residues" evidence="2">
    <location>
        <begin position="315"/>
        <end position="331"/>
    </location>
</feature>
<feature type="sequence conflict" description="In Ref. 3; AAU09705." evidence="4" ref="3">
    <original>K</original>
    <variation>E</variation>
    <location>
        <position position="327"/>
    </location>
</feature>
<reference key="1">
    <citation type="journal article" date="1997" name="Nature">
        <title>The nucleotide sequence of Saccharomyces cerevisiae chromosome IV.</title>
        <authorList>
            <person name="Jacq C."/>
            <person name="Alt-Moerbe J."/>
            <person name="Andre B."/>
            <person name="Arnold W."/>
            <person name="Bahr A."/>
            <person name="Ballesta J.P.G."/>
            <person name="Bargues M."/>
            <person name="Baron L."/>
            <person name="Becker A."/>
            <person name="Biteau N."/>
            <person name="Bloecker H."/>
            <person name="Blugeon C."/>
            <person name="Boskovic J."/>
            <person name="Brandt P."/>
            <person name="Brueckner M."/>
            <person name="Buitrago M.J."/>
            <person name="Coster F."/>
            <person name="Delaveau T."/>
            <person name="del Rey F."/>
            <person name="Dujon B."/>
            <person name="Eide L.G."/>
            <person name="Garcia-Cantalejo J.M."/>
            <person name="Goffeau A."/>
            <person name="Gomez-Peris A."/>
            <person name="Granotier C."/>
            <person name="Hanemann V."/>
            <person name="Hankeln T."/>
            <person name="Hoheisel J.D."/>
            <person name="Jaeger W."/>
            <person name="Jimenez A."/>
            <person name="Jonniaux J.-L."/>
            <person name="Kraemer C."/>
            <person name="Kuester H."/>
            <person name="Laamanen P."/>
            <person name="Legros Y."/>
            <person name="Louis E.J."/>
            <person name="Moeller-Rieker S."/>
            <person name="Monnet A."/>
            <person name="Moro M."/>
            <person name="Mueller-Auer S."/>
            <person name="Nussbaumer B."/>
            <person name="Paricio N."/>
            <person name="Paulin L."/>
            <person name="Perea J."/>
            <person name="Perez-Alonso M."/>
            <person name="Perez-Ortin J.E."/>
            <person name="Pohl T.M."/>
            <person name="Prydz H."/>
            <person name="Purnelle B."/>
            <person name="Rasmussen S.W."/>
            <person name="Remacha M.A."/>
            <person name="Revuelta J.L."/>
            <person name="Rieger M."/>
            <person name="Salom D."/>
            <person name="Saluz H.P."/>
            <person name="Saiz J.E."/>
            <person name="Saren A.-M."/>
            <person name="Schaefer M."/>
            <person name="Scharfe M."/>
            <person name="Schmidt E.R."/>
            <person name="Schneider C."/>
            <person name="Scholler P."/>
            <person name="Schwarz S."/>
            <person name="Soler-Mira A."/>
            <person name="Urrestarazu L.A."/>
            <person name="Verhasselt P."/>
            <person name="Vissers S."/>
            <person name="Voet M."/>
            <person name="Volckaert G."/>
            <person name="Wagner G."/>
            <person name="Wambutt R."/>
            <person name="Wedler E."/>
            <person name="Wedler H."/>
            <person name="Woelfl S."/>
            <person name="Harris D.E."/>
            <person name="Bowman S."/>
            <person name="Brown D."/>
            <person name="Churcher C.M."/>
            <person name="Connor R."/>
            <person name="Dedman K."/>
            <person name="Gentles S."/>
            <person name="Hamlin N."/>
            <person name="Hunt S."/>
            <person name="Jones L."/>
            <person name="McDonald S."/>
            <person name="Murphy L.D."/>
            <person name="Niblett D."/>
            <person name="Odell C."/>
            <person name="Oliver K."/>
            <person name="Rajandream M.A."/>
            <person name="Richards C."/>
            <person name="Shore L."/>
            <person name="Walsh S.V."/>
            <person name="Barrell B.G."/>
            <person name="Dietrich F.S."/>
            <person name="Mulligan J.T."/>
            <person name="Allen E."/>
            <person name="Araujo R."/>
            <person name="Aviles E."/>
            <person name="Berno A."/>
            <person name="Carpenter J."/>
            <person name="Chen E."/>
            <person name="Cherry J.M."/>
            <person name="Chung E."/>
            <person name="Duncan M."/>
            <person name="Hunicke-Smith S."/>
            <person name="Hyman R.W."/>
            <person name="Komp C."/>
            <person name="Lashkari D."/>
            <person name="Lew H."/>
            <person name="Lin D."/>
            <person name="Mosedale D."/>
            <person name="Nakahara K."/>
            <person name="Namath A."/>
            <person name="Oefner P."/>
            <person name="Oh C."/>
            <person name="Petel F.X."/>
            <person name="Roberts D."/>
            <person name="Schramm S."/>
            <person name="Schroeder M."/>
            <person name="Shogren T."/>
            <person name="Shroff N."/>
            <person name="Winant A."/>
            <person name="Yelton M.A."/>
            <person name="Botstein D."/>
            <person name="Davis R.W."/>
            <person name="Johnston M."/>
            <person name="Andrews S."/>
            <person name="Brinkman R."/>
            <person name="Cooper J."/>
            <person name="Ding H."/>
            <person name="Du Z."/>
            <person name="Favello A."/>
            <person name="Fulton L."/>
            <person name="Gattung S."/>
            <person name="Greco T."/>
            <person name="Hallsworth K."/>
            <person name="Hawkins J."/>
            <person name="Hillier L.W."/>
            <person name="Jier M."/>
            <person name="Johnson D."/>
            <person name="Johnston L."/>
            <person name="Kirsten J."/>
            <person name="Kucaba T."/>
            <person name="Langston Y."/>
            <person name="Latreille P."/>
            <person name="Le T."/>
            <person name="Mardis E."/>
            <person name="Menezes S."/>
            <person name="Miller N."/>
            <person name="Nhan M."/>
            <person name="Pauley A."/>
            <person name="Peluso D."/>
            <person name="Rifkin L."/>
            <person name="Riles L."/>
            <person name="Taich A."/>
            <person name="Trevaskis E."/>
            <person name="Vignati D."/>
            <person name="Wilcox L."/>
            <person name="Wohldman P."/>
            <person name="Vaudin M."/>
            <person name="Wilson R."/>
            <person name="Waterston R."/>
            <person name="Albermann K."/>
            <person name="Hani J."/>
            <person name="Heumann K."/>
            <person name="Kleine K."/>
            <person name="Mewes H.-W."/>
            <person name="Zollner A."/>
            <person name="Zaccaria P."/>
        </authorList>
    </citation>
    <scope>NUCLEOTIDE SEQUENCE [LARGE SCALE GENOMIC DNA]</scope>
    <source>
        <strain>ATCC 204508 / S288c</strain>
    </source>
</reference>
<reference key="2">
    <citation type="journal article" date="2014" name="G3 (Bethesda)">
        <title>The reference genome sequence of Saccharomyces cerevisiae: Then and now.</title>
        <authorList>
            <person name="Engel S.R."/>
            <person name="Dietrich F.S."/>
            <person name="Fisk D.G."/>
            <person name="Binkley G."/>
            <person name="Balakrishnan R."/>
            <person name="Costanzo M.C."/>
            <person name="Dwight S.S."/>
            <person name="Hitz B.C."/>
            <person name="Karra K."/>
            <person name="Nash R.S."/>
            <person name="Weng S."/>
            <person name="Wong E.D."/>
            <person name="Lloyd P."/>
            <person name="Skrzypek M.S."/>
            <person name="Miyasato S.R."/>
            <person name="Simison M."/>
            <person name="Cherry J.M."/>
        </authorList>
    </citation>
    <scope>GENOME REANNOTATION</scope>
    <source>
        <strain>ATCC 204508 / S288c</strain>
    </source>
</reference>
<reference key="3">
    <citation type="journal article" date="2007" name="Genome Res.">
        <title>Approaching a complete repository of sequence-verified protein-encoding clones for Saccharomyces cerevisiae.</title>
        <authorList>
            <person name="Hu Y."/>
            <person name="Rolfs A."/>
            <person name="Bhullar B."/>
            <person name="Murthy T.V.S."/>
            <person name="Zhu C."/>
            <person name="Berger M.F."/>
            <person name="Camargo A.A."/>
            <person name="Kelley F."/>
            <person name="McCarron S."/>
            <person name="Jepson D."/>
            <person name="Richardson A."/>
            <person name="Raphael J."/>
            <person name="Moreira D."/>
            <person name="Taycher E."/>
            <person name="Zuo D."/>
            <person name="Mohr S."/>
            <person name="Kane M.F."/>
            <person name="Williamson J."/>
            <person name="Simpson A.J.G."/>
            <person name="Bulyk M.L."/>
            <person name="Harlow E."/>
            <person name="Marsischky G."/>
            <person name="Kolodner R.D."/>
            <person name="LaBaer J."/>
        </authorList>
    </citation>
    <scope>NUCLEOTIDE SEQUENCE [GENOMIC DNA]</scope>
    <source>
        <strain>ATCC 204508 / S288c</strain>
    </source>
</reference>
<reference key="4">
    <citation type="journal article" date="2000" name="EMBO J.">
        <title>Role of the spindle pole body of yeast in mediating assembly of the prospore membrane during meiosis.</title>
        <authorList>
            <person name="Knop M."/>
            <person name="Strasser K."/>
        </authorList>
    </citation>
    <scope>SUBCELLULAR LOCATION</scope>
    <scope>DEVELOPMENTAL STAGE</scope>
</reference>
<reference key="5">
    <citation type="journal article" date="2001" name="EMBO J.">
        <title>Prospore membrane formation linked to the leading edge protein (LEP) coat assembly.</title>
        <authorList>
            <person name="Moreno-Borchart A.C."/>
            <person name="Strasser K."/>
            <person name="Finkbeiner M.G."/>
            <person name="Shevchenko A."/>
            <person name="Shevchenko A."/>
            <person name="Knop M."/>
        </authorList>
    </citation>
    <scope>COMPOSITION OF A SPB COMPLEX</scope>
</reference>
<reference key="6">
    <citation type="journal article" date="2002" name="Genetics">
        <title>Ady3p links spindle pole body function to spore wall synthesis in Saccharomyces cerevisiae.</title>
        <authorList>
            <person name="Nickas M.E."/>
            <person name="Neiman A.M."/>
        </authorList>
    </citation>
    <scope>RECRUITMENT BY ADY3</scope>
</reference>
<comment type="function">
    <text>Involved in the pathway that organizes the prospore membrane (PSM) during sporulation.</text>
</comment>
<comment type="subunit">
    <text>May interact directly with ADY3. Probable component of a spindle pole body (SPB) complex composed of ADY3, SSP1, DON1, MPC54, SPO21/MPC70, NUD1 and CNM67.</text>
</comment>
<comment type="subcellular location">
    <subcellularLocation>
        <location evidence="3">Prospore membrane</location>
    </subcellularLocation>
    <text>Towards the end of meiosis I, or early stages of meiosis II, it forms circular structures above the meiotic plaque. As soon as an assembled prospore membrane is visible during meiosis II, it is detected at the leading edge, which cover the ring-shape opening of the PSMs. Probably recruited to the leading edges by ADY3.</text>
</comment>
<comment type="developmental stage">
    <text evidence="3">Meiosis-specific.</text>
</comment>
<sequence>MGKKNRKGKENNAAKTSFLKVENIKNTNSGLELPSQDYTNVEEKESSPKTDFPLITKEHVNTKTDSNILDYPTIGDLVSSVEKLCVLKELKIAFPEVDDTLIKAILIASQGVLEPAFNSLLYYSSPEENTDFALPMKPISVEDYSKINVSEILQREIFDDIEDEFSGQGINGSMVISKIESELSSLAEHIGNISTPGSNREVAESTRNVAVAEGHNTILSNEDSILKGKEKGKEEEKEKGEEKGVNSLKGAAVKVVAKSLKNNRIPVTVKRNEPSNNLFDVLNCDESEEEEEQDVETNTSNQERKNQGGNTEVPEAQRDSADRLPAKDDGGYKSAFGTDSCGLFAADAKDEKKQVHPSRQELSFT</sequence>
<gene>
    <name type="primary">DON1</name>
    <name type="ordered locus">YDR273W</name>
    <name type="ORF">D9954.4</name>
</gene>